<organism>
    <name type="scientific">Staphylococcus aureus (strain NCTC 8325 / PS 47)</name>
    <dbReference type="NCBI Taxonomy" id="93061"/>
    <lineage>
        <taxon>Bacteria</taxon>
        <taxon>Bacillati</taxon>
        <taxon>Bacillota</taxon>
        <taxon>Bacilli</taxon>
        <taxon>Bacillales</taxon>
        <taxon>Staphylococcaceae</taxon>
        <taxon>Staphylococcus</taxon>
    </lineage>
</organism>
<reference key="1">
    <citation type="book" date="2006" name="Gram positive pathogens, 2nd edition">
        <title>The Staphylococcus aureus NCTC 8325 genome.</title>
        <editorList>
            <person name="Fischetti V."/>
            <person name="Novick R."/>
            <person name="Ferretti J."/>
            <person name="Portnoy D."/>
            <person name="Rood J."/>
        </editorList>
        <authorList>
            <person name="Gillaspy A.F."/>
            <person name="Worrell V."/>
            <person name="Orvis J."/>
            <person name="Roe B.A."/>
            <person name="Dyer D.W."/>
            <person name="Iandolo J.J."/>
        </authorList>
    </citation>
    <scope>NUCLEOTIDE SEQUENCE [LARGE SCALE GENOMIC DNA]</scope>
    <source>
        <strain>NCTC 8325 / PS 47</strain>
    </source>
</reference>
<feature type="chain" id="PRO_0000297384" description="3-methyl-2-oxobutanoate hydroxymethyltransferase">
    <location>
        <begin position="1"/>
        <end position="272"/>
    </location>
</feature>
<feature type="active site" description="Proton acceptor" evidence="1">
    <location>
        <position position="179"/>
    </location>
</feature>
<feature type="binding site" evidence="1">
    <location>
        <begin position="43"/>
        <end position="44"/>
    </location>
    <ligand>
        <name>3-methyl-2-oxobutanoate</name>
        <dbReference type="ChEBI" id="CHEBI:11851"/>
    </ligand>
</feature>
<feature type="binding site" evidence="1">
    <location>
        <position position="43"/>
    </location>
    <ligand>
        <name>Mg(2+)</name>
        <dbReference type="ChEBI" id="CHEBI:18420"/>
    </ligand>
</feature>
<feature type="binding site" evidence="1">
    <location>
        <position position="82"/>
    </location>
    <ligand>
        <name>3-methyl-2-oxobutanoate</name>
        <dbReference type="ChEBI" id="CHEBI:11851"/>
    </ligand>
</feature>
<feature type="binding site" evidence="1">
    <location>
        <position position="82"/>
    </location>
    <ligand>
        <name>Mg(2+)</name>
        <dbReference type="ChEBI" id="CHEBI:18420"/>
    </ligand>
</feature>
<feature type="binding site" evidence="1">
    <location>
        <position position="112"/>
    </location>
    <ligand>
        <name>3-methyl-2-oxobutanoate</name>
        <dbReference type="ChEBI" id="CHEBI:11851"/>
    </ligand>
</feature>
<feature type="binding site" evidence="1">
    <location>
        <position position="114"/>
    </location>
    <ligand>
        <name>Mg(2+)</name>
        <dbReference type="ChEBI" id="CHEBI:18420"/>
    </ligand>
</feature>
<comment type="function">
    <text evidence="1">Catalyzes the reversible reaction in which hydroxymethyl group from 5,10-methylenetetrahydrofolate is transferred onto alpha-ketoisovalerate to form ketopantoate.</text>
</comment>
<comment type="catalytic activity">
    <reaction evidence="1">
        <text>3-methyl-2-oxobutanoate + (6R)-5,10-methylene-5,6,7,8-tetrahydrofolate + H2O = 2-dehydropantoate + (6S)-5,6,7,8-tetrahydrofolate</text>
        <dbReference type="Rhea" id="RHEA:11824"/>
        <dbReference type="ChEBI" id="CHEBI:11561"/>
        <dbReference type="ChEBI" id="CHEBI:11851"/>
        <dbReference type="ChEBI" id="CHEBI:15377"/>
        <dbReference type="ChEBI" id="CHEBI:15636"/>
        <dbReference type="ChEBI" id="CHEBI:57453"/>
        <dbReference type="EC" id="2.1.2.11"/>
    </reaction>
</comment>
<comment type="cofactor">
    <cofactor evidence="1">
        <name>Mg(2+)</name>
        <dbReference type="ChEBI" id="CHEBI:18420"/>
    </cofactor>
    <text evidence="1">Binds 1 Mg(2+) ion per subunit.</text>
</comment>
<comment type="pathway">
    <text evidence="1">Cofactor biosynthesis; (R)-pantothenate biosynthesis; (R)-pantoate from 3-methyl-2-oxobutanoate: step 1/2.</text>
</comment>
<comment type="subunit">
    <text evidence="1">Homodecamer; pentamer of dimers.</text>
</comment>
<comment type="subcellular location">
    <subcellularLocation>
        <location evidence="1">Cytoplasm</location>
    </subcellularLocation>
</comment>
<comment type="similarity">
    <text evidence="1">Belongs to the PanB family.</text>
</comment>
<comment type="sequence caution" evidence="2">
    <conflict type="erroneous initiation">
        <sequence resource="EMBL-CDS" id="ABD31914"/>
    </conflict>
</comment>
<name>PANB_STAA8</name>
<keyword id="KW-0963">Cytoplasm</keyword>
<keyword id="KW-0460">Magnesium</keyword>
<keyword id="KW-0479">Metal-binding</keyword>
<keyword id="KW-0566">Pantothenate biosynthesis</keyword>
<keyword id="KW-1185">Reference proteome</keyword>
<keyword id="KW-0808">Transferase</keyword>
<sequence length="272" mass="29256">MKTVSQLIDMKQKQTKISMVTAYDFPSAKQVEAAGIDMILVGDSLGMTVLGYESTVQVTLADMIHHGRAVRRGAPNTFVVVDMPIGAVGISMTQDLNHALKLYQETNANAIKAEGAHITPFIEKATAIGIPVVAHLGLTPQSVGVMGYKLQGATKEAAEQLILDAKNVEQAGAVALVLEAIPNDLAEEISKHLTIPVIGIGAGKGTDGQVLVYHDMLNYGVEHKAKFVKQFADFSVGVDGLKQYDQEVKSGAFPSEEYTYKKKIMNEVNNND</sequence>
<proteinExistence type="inferred from homology"/>
<accession>Q2FV21</accession>
<dbReference type="EC" id="2.1.2.11" evidence="1"/>
<dbReference type="EMBL" id="CP000253">
    <property type="protein sequence ID" value="ABD31914.1"/>
    <property type="status" value="ALT_INIT"/>
    <property type="molecule type" value="Genomic_DNA"/>
</dbReference>
<dbReference type="RefSeq" id="WP_000860047.1">
    <property type="nucleotide sequence ID" value="NZ_LS483365.1"/>
</dbReference>
<dbReference type="RefSeq" id="WP_001803124.1">
    <property type="nucleotide sequence ID" value="NC_007795.1"/>
</dbReference>
<dbReference type="RefSeq" id="YP_501371.1">
    <property type="nucleotide sequence ID" value="NC_007795.1"/>
</dbReference>
<dbReference type="SMR" id="Q2FV21"/>
<dbReference type="STRING" id="93061.SAOUHSC_02919"/>
<dbReference type="PaxDb" id="1280-SAXN108_2868"/>
<dbReference type="GeneID" id="3921370"/>
<dbReference type="KEGG" id="sao:SAOUHSC_02919"/>
<dbReference type="PATRIC" id="fig|93061.5.peg.2638"/>
<dbReference type="eggNOG" id="COG0413">
    <property type="taxonomic scope" value="Bacteria"/>
</dbReference>
<dbReference type="HOGENOM" id="CLU_036645_1_0_9"/>
<dbReference type="OrthoDB" id="9781789at2"/>
<dbReference type="UniPathway" id="UPA00028">
    <property type="reaction ID" value="UER00003"/>
</dbReference>
<dbReference type="Proteomes" id="UP000008816">
    <property type="component" value="Chromosome"/>
</dbReference>
<dbReference type="GO" id="GO:0005737">
    <property type="term" value="C:cytoplasm"/>
    <property type="evidence" value="ECO:0000318"/>
    <property type="project" value="GO_Central"/>
</dbReference>
<dbReference type="GO" id="GO:0003864">
    <property type="term" value="F:3-methyl-2-oxobutanoate hydroxymethyltransferase activity"/>
    <property type="evidence" value="ECO:0000318"/>
    <property type="project" value="GO_Central"/>
</dbReference>
<dbReference type="GO" id="GO:0000287">
    <property type="term" value="F:magnesium ion binding"/>
    <property type="evidence" value="ECO:0000318"/>
    <property type="project" value="GO_Central"/>
</dbReference>
<dbReference type="GO" id="GO:0015940">
    <property type="term" value="P:pantothenate biosynthetic process"/>
    <property type="evidence" value="ECO:0000318"/>
    <property type="project" value="GO_Central"/>
</dbReference>
<dbReference type="CDD" id="cd06557">
    <property type="entry name" value="KPHMT-like"/>
    <property type="match status" value="1"/>
</dbReference>
<dbReference type="FunFam" id="3.20.20.60:FF:000030">
    <property type="entry name" value="3-methyl-2-oxobutanoate hydroxymethyltransferase"/>
    <property type="match status" value="1"/>
</dbReference>
<dbReference type="Gene3D" id="3.20.20.60">
    <property type="entry name" value="Phosphoenolpyruvate-binding domains"/>
    <property type="match status" value="1"/>
</dbReference>
<dbReference type="HAMAP" id="MF_00156">
    <property type="entry name" value="PanB"/>
    <property type="match status" value="1"/>
</dbReference>
<dbReference type="InterPro" id="IPR003700">
    <property type="entry name" value="Pantoate_hydroxy_MeTrfase"/>
</dbReference>
<dbReference type="InterPro" id="IPR015813">
    <property type="entry name" value="Pyrv/PenolPyrv_kinase-like_dom"/>
</dbReference>
<dbReference type="InterPro" id="IPR040442">
    <property type="entry name" value="Pyrv_kinase-like_dom_sf"/>
</dbReference>
<dbReference type="NCBIfam" id="TIGR00222">
    <property type="entry name" value="panB"/>
    <property type="match status" value="1"/>
</dbReference>
<dbReference type="NCBIfam" id="NF001452">
    <property type="entry name" value="PRK00311.1"/>
    <property type="match status" value="1"/>
</dbReference>
<dbReference type="PANTHER" id="PTHR20881">
    <property type="entry name" value="3-METHYL-2-OXOBUTANOATE HYDROXYMETHYLTRANSFERASE"/>
    <property type="match status" value="1"/>
</dbReference>
<dbReference type="PANTHER" id="PTHR20881:SF0">
    <property type="entry name" value="3-METHYL-2-OXOBUTANOATE HYDROXYMETHYLTRANSFERASE"/>
    <property type="match status" value="1"/>
</dbReference>
<dbReference type="Pfam" id="PF02548">
    <property type="entry name" value="Pantoate_transf"/>
    <property type="match status" value="1"/>
</dbReference>
<dbReference type="PIRSF" id="PIRSF000388">
    <property type="entry name" value="Pantoate_hydroxy_MeTrfase"/>
    <property type="match status" value="1"/>
</dbReference>
<dbReference type="SUPFAM" id="SSF51621">
    <property type="entry name" value="Phosphoenolpyruvate/pyruvate domain"/>
    <property type="match status" value="1"/>
</dbReference>
<gene>
    <name evidence="1" type="primary">panB</name>
    <name type="ordered locus">SAOUHSC_02919</name>
</gene>
<evidence type="ECO:0000255" key="1">
    <source>
        <dbReference type="HAMAP-Rule" id="MF_00156"/>
    </source>
</evidence>
<evidence type="ECO:0000305" key="2"/>
<protein>
    <recommendedName>
        <fullName evidence="1">3-methyl-2-oxobutanoate hydroxymethyltransferase</fullName>
        <ecNumber evidence="1">2.1.2.11</ecNumber>
    </recommendedName>
    <alternativeName>
        <fullName evidence="1">Ketopantoate hydroxymethyltransferase</fullName>
        <shortName evidence="1">KPHMT</shortName>
    </alternativeName>
</protein>